<gene>
    <name evidence="1" type="primary">gltX</name>
    <name type="ordered locus">BSU00920</name>
</gene>
<reference key="1">
    <citation type="journal article" date="1990" name="J. Biol. Chem.">
        <title>Glutamyl-tRNA synthetases of Bacillus subtilis 168T and of Bacillus stearothermophilus. Cloning and sequencing of the gltX genes and comparison with other aminoacyl-tRNA synthetases.</title>
        <authorList>
            <person name="Breton R."/>
            <person name="Watson D."/>
            <person name="Yaguchi M."/>
            <person name="Lapointe J."/>
        </authorList>
    </citation>
    <scope>NUCLEOTIDE SEQUENCE [GENOMIC DNA]</scope>
    <source>
        <strain>168</strain>
    </source>
</reference>
<reference key="2">
    <citation type="journal article" date="1994" name="J. Biol. Chem.">
        <title>Clustering and co-transcription of the Bacillus subtilis genes encoding the aminoacyl-tRNA synthetases specific for glutamate and for cysteine and the first enzyme for cysteine biosynthesis.</title>
        <authorList>
            <person name="Gagnon Y."/>
            <person name="Breton R."/>
            <person name="Putzer H."/>
            <person name="Pelchat M."/>
            <person name="Grunberg-Manago M."/>
            <person name="Lapointe J."/>
        </authorList>
    </citation>
    <scope>NUCLEOTIDE SEQUENCE [GENOMIC DNA]</scope>
    <source>
        <strain>168</strain>
    </source>
</reference>
<reference key="3">
    <citation type="journal article" date="1994" name="DNA Res.">
        <title>Systematic sequencing of the 180 kilobase region of the Bacillus subtilis chromosome containing the replication origin.</title>
        <authorList>
            <person name="Ogasawara N."/>
            <person name="Nakai S."/>
            <person name="Yoshikawa H."/>
        </authorList>
    </citation>
    <scope>NUCLEOTIDE SEQUENCE [GENOMIC DNA]</scope>
    <source>
        <strain>168</strain>
    </source>
</reference>
<reference key="4">
    <citation type="submission" date="1996-02" db="EMBL/GenBank/DDBJ databases">
        <authorList>
            <person name="Ishino Y."/>
            <person name="Kim S.I."/>
            <person name="Soell D."/>
        </authorList>
    </citation>
    <scope>NUCLEOTIDE SEQUENCE [GENOMIC DNA]</scope>
</reference>
<reference key="5">
    <citation type="journal article" date="1997" name="Nature">
        <title>The complete genome sequence of the Gram-positive bacterium Bacillus subtilis.</title>
        <authorList>
            <person name="Kunst F."/>
            <person name="Ogasawara N."/>
            <person name="Moszer I."/>
            <person name="Albertini A.M."/>
            <person name="Alloni G."/>
            <person name="Azevedo V."/>
            <person name="Bertero M.G."/>
            <person name="Bessieres P."/>
            <person name="Bolotin A."/>
            <person name="Borchert S."/>
            <person name="Borriss R."/>
            <person name="Boursier L."/>
            <person name="Brans A."/>
            <person name="Braun M."/>
            <person name="Brignell S.C."/>
            <person name="Bron S."/>
            <person name="Brouillet S."/>
            <person name="Bruschi C.V."/>
            <person name="Caldwell B."/>
            <person name="Capuano V."/>
            <person name="Carter N.M."/>
            <person name="Choi S.-K."/>
            <person name="Codani J.-J."/>
            <person name="Connerton I.F."/>
            <person name="Cummings N.J."/>
            <person name="Daniel R.A."/>
            <person name="Denizot F."/>
            <person name="Devine K.M."/>
            <person name="Duesterhoeft A."/>
            <person name="Ehrlich S.D."/>
            <person name="Emmerson P.T."/>
            <person name="Entian K.-D."/>
            <person name="Errington J."/>
            <person name="Fabret C."/>
            <person name="Ferrari E."/>
            <person name="Foulger D."/>
            <person name="Fritz C."/>
            <person name="Fujita M."/>
            <person name="Fujita Y."/>
            <person name="Fuma S."/>
            <person name="Galizzi A."/>
            <person name="Galleron N."/>
            <person name="Ghim S.-Y."/>
            <person name="Glaser P."/>
            <person name="Goffeau A."/>
            <person name="Golightly E.J."/>
            <person name="Grandi G."/>
            <person name="Guiseppi G."/>
            <person name="Guy B.J."/>
            <person name="Haga K."/>
            <person name="Haiech J."/>
            <person name="Harwood C.R."/>
            <person name="Henaut A."/>
            <person name="Hilbert H."/>
            <person name="Holsappel S."/>
            <person name="Hosono S."/>
            <person name="Hullo M.-F."/>
            <person name="Itaya M."/>
            <person name="Jones L.-M."/>
            <person name="Joris B."/>
            <person name="Karamata D."/>
            <person name="Kasahara Y."/>
            <person name="Klaerr-Blanchard M."/>
            <person name="Klein C."/>
            <person name="Kobayashi Y."/>
            <person name="Koetter P."/>
            <person name="Koningstein G."/>
            <person name="Krogh S."/>
            <person name="Kumano M."/>
            <person name="Kurita K."/>
            <person name="Lapidus A."/>
            <person name="Lardinois S."/>
            <person name="Lauber J."/>
            <person name="Lazarevic V."/>
            <person name="Lee S.-M."/>
            <person name="Levine A."/>
            <person name="Liu H."/>
            <person name="Masuda S."/>
            <person name="Mauel C."/>
            <person name="Medigue C."/>
            <person name="Medina N."/>
            <person name="Mellado R.P."/>
            <person name="Mizuno M."/>
            <person name="Moestl D."/>
            <person name="Nakai S."/>
            <person name="Noback M."/>
            <person name="Noone D."/>
            <person name="O'Reilly M."/>
            <person name="Ogawa K."/>
            <person name="Ogiwara A."/>
            <person name="Oudega B."/>
            <person name="Park S.-H."/>
            <person name="Parro V."/>
            <person name="Pohl T.M."/>
            <person name="Portetelle D."/>
            <person name="Porwollik S."/>
            <person name="Prescott A.M."/>
            <person name="Presecan E."/>
            <person name="Pujic P."/>
            <person name="Purnelle B."/>
            <person name="Rapoport G."/>
            <person name="Rey M."/>
            <person name="Reynolds S."/>
            <person name="Rieger M."/>
            <person name="Rivolta C."/>
            <person name="Rocha E."/>
            <person name="Roche B."/>
            <person name="Rose M."/>
            <person name="Sadaie Y."/>
            <person name="Sato T."/>
            <person name="Scanlan E."/>
            <person name="Schleich S."/>
            <person name="Schroeter R."/>
            <person name="Scoffone F."/>
            <person name="Sekiguchi J."/>
            <person name="Sekowska A."/>
            <person name="Seror S.J."/>
            <person name="Serror P."/>
            <person name="Shin B.-S."/>
            <person name="Soldo B."/>
            <person name="Sorokin A."/>
            <person name="Tacconi E."/>
            <person name="Takagi T."/>
            <person name="Takahashi H."/>
            <person name="Takemaru K."/>
            <person name="Takeuchi M."/>
            <person name="Tamakoshi A."/>
            <person name="Tanaka T."/>
            <person name="Terpstra P."/>
            <person name="Tognoni A."/>
            <person name="Tosato V."/>
            <person name="Uchiyama S."/>
            <person name="Vandenbol M."/>
            <person name="Vannier F."/>
            <person name="Vassarotti A."/>
            <person name="Viari A."/>
            <person name="Wambutt R."/>
            <person name="Wedler E."/>
            <person name="Wedler H."/>
            <person name="Weitzenegger T."/>
            <person name="Winters P."/>
            <person name="Wipat A."/>
            <person name="Yamamoto H."/>
            <person name="Yamane K."/>
            <person name="Yasumoto K."/>
            <person name="Yata K."/>
            <person name="Yoshida K."/>
            <person name="Yoshikawa H.-F."/>
            <person name="Zumstein E."/>
            <person name="Yoshikawa H."/>
            <person name="Danchin A."/>
        </authorList>
    </citation>
    <scope>NUCLEOTIDE SEQUENCE [LARGE SCALE GENOMIC DNA]</scope>
    <source>
        <strain>168</strain>
    </source>
</reference>
<reference key="6">
    <citation type="journal article" date="1993" name="Biochemistry">
        <title>The glutamyl-tRNA synthetase of Escherichia coli contains one atom of zinc essential for its native conformation and its catalytic activity.</title>
        <authorList>
            <person name="Liu J."/>
            <person name="Lin S.-X."/>
            <person name="Blochet J.-E."/>
            <person name="Pezolet M."/>
            <person name="Lapointe J."/>
        </authorList>
    </citation>
    <scope>COFACTOR</scope>
</reference>
<sequence>MGNEVRVRYAPSPTGHLHIGNARTALFNYLFARNQGGKFIIRVEDTDKKRNIEGGEQSQLNYLKWLGIDWDESVDVGGEYGPYRQSERNDIYKVYYEELLEKGLAYKCYCTEEELEKEREEQIARGEMPRYSGKHRDLTQEEQEKFIAEGRKPSIRFRVPEGKVIAFNDIVKGEISFESDGIGDFVIVKKDGTPTYNFAVAIDDYLMKMTHVLRGEDHISNTPKQIMIYQAFGWDIPQFGHMTLIVNESRKKLSKRDESIIQFIEQYKELGYLPEALFNFIGLLGWSPVGEEELFTKEQFIEIFDVNRLSKSPALFDMHKLKWVNNQYVKKLDLDQVVELTLPHLQKAGKVGTELSAEEQEWVRKLISLYHEQLSYGAEIVELTDLFFTDEIEYNQEAKAVLEEEQVPEVLSTFAAKLEELEEFTPDNIKASIKAVQKETGHKGKKLFMPIRVAVTGQTHGPELPQSIELIGKETAIQRLKNI</sequence>
<keyword id="KW-0030">Aminoacyl-tRNA synthetase</keyword>
<keyword id="KW-0067">ATP-binding</keyword>
<keyword id="KW-0963">Cytoplasm</keyword>
<keyword id="KW-0436">Ligase</keyword>
<keyword id="KW-0479">Metal-binding</keyword>
<keyword id="KW-0547">Nucleotide-binding</keyword>
<keyword id="KW-0648">Protein biosynthesis</keyword>
<keyword id="KW-1185">Reference proteome</keyword>
<keyword id="KW-0862">Zinc</keyword>
<dbReference type="EC" id="6.1.1.17" evidence="1"/>
<dbReference type="EMBL" id="M55073">
    <property type="protein sequence ID" value="AAA22495.1"/>
    <property type="molecule type" value="Genomic_DNA"/>
</dbReference>
<dbReference type="EMBL" id="L14580">
    <property type="protein sequence ID" value="AAA21796.1"/>
    <property type="molecule type" value="Genomic_DNA"/>
</dbReference>
<dbReference type="EMBL" id="D26185">
    <property type="protein sequence ID" value="BAA05326.1"/>
    <property type="molecule type" value="Genomic_DNA"/>
</dbReference>
<dbReference type="EMBL" id="U49789">
    <property type="protein sequence ID" value="AAC31971.1"/>
    <property type="molecule type" value="Genomic_DNA"/>
</dbReference>
<dbReference type="EMBL" id="AL009126">
    <property type="protein sequence ID" value="CAB11868.1"/>
    <property type="molecule type" value="Genomic_DNA"/>
</dbReference>
<dbReference type="PIR" id="A36090">
    <property type="entry name" value="SYBSET"/>
</dbReference>
<dbReference type="RefSeq" id="NP_387973.1">
    <property type="nucleotide sequence ID" value="NC_000964.3"/>
</dbReference>
<dbReference type="RefSeq" id="WP_004399675.1">
    <property type="nucleotide sequence ID" value="NZ_OZ025638.1"/>
</dbReference>
<dbReference type="SMR" id="P22250"/>
<dbReference type="FunCoup" id="P22250">
    <property type="interactions" value="791"/>
</dbReference>
<dbReference type="IntAct" id="P22250">
    <property type="interactions" value="1"/>
</dbReference>
<dbReference type="MINT" id="P22250"/>
<dbReference type="STRING" id="224308.BSU00920"/>
<dbReference type="jPOST" id="P22250"/>
<dbReference type="PaxDb" id="224308-BSU00920"/>
<dbReference type="EnsemblBacteria" id="CAB11868">
    <property type="protein sequence ID" value="CAB11868"/>
    <property type="gene ID" value="BSU_00920"/>
</dbReference>
<dbReference type="GeneID" id="936862"/>
<dbReference type="KEGG" id="bsu:BSU00920"/>
<dbReference type="PATRIC" id="fig|224308.179.peg.93"/>
<dbReference type="eggNOG" id="COG0008">
    <property type="taxonomic scope" value="Bacteria"/>
</dbReference>
<dbReference type="InParanoid" id="P22250"/>
<dbReference type="OrthoDB" id="9807503at2"/>
<dbReference type="PhylomeDB" id="P22250"/>
<dbReference type="BioCyc" id="BSUB:BSU00920-MONOMER"/>
<dbReference type="BioCyc" id="MetaCyc:MONOMER-13959"/>
<dbReference type="SABIO-RK" id="P22250"/>
<dbReference type="Proteomes" id="UP000001570">
    <property type="component" value="Chromosome"/>
</dbReference>
<dbReference type="GO" id="GO:0005829">
    <property type="term" value="C:cytosol"/>
    <property type="evidence" value="ECO:0000318"/>
    <property type="project" value="GO_Central"/>
</dbReference>
<dbReference type="GO" id="GO:0005524">
    <property type="term" value="F:ATP binding"/>
    <property type="evidence" value="ECO:0007669"/>
    <property type="project" value="UniProtKB-UniRule"/>
</dbReference>
<dbReference type="GO" id="GO:0004818">
    <property type="term" value="F:glutamate-tRNA ligase activity"/>
    <property type="evidence" value="ECO:0000318"/>
    <property type="project" value="GO_Central"/>
</dbReference>
<dbReference type="GO" id="GO:0000049">
    <property type="term" value="F:tRNA binding"/>
    <property type="evidence" value="ECO:0007669"/>
    <property type="project" value="InterPro"/>
</dbReference>
<dbReference type="GO" id="GO:0008270">
    <property type="term" value="F:zinc ion binding"/>
    <property type="evidence" value="ECO:0007669"/>
    <property type="project" value="UniProtKB-UniRule"/>
</dbReference>
<dbReference type="GO" id="GO:0006424">
    <property type="term" value="P:glutamyl-tRNA aminoacylation"/>
    <property type="evidence" value="ECO:0000318"/>
    <property type="project" value="GO_Central"/>
</dbReference>
<dbReference type="CDD" id="cd00808">
    <property type="entry name" value="GluRS_core"/>
    <property type="match status" value="1"/>
</dbReference>
<dbReference type="FunFam" id="1.10.10.350:FF:000002">
    <property type="entry name" value="Glutamate--tRNA ligase"/>
    <property type="match status" value="1"/>
</dbReference>
<dbReference type="FunFam" id="3.40.50.620:FF:000007">
    <property type="entry name" value="Glutamate--tRNA ligase"/>
    <property type="match status" value="1"/>
</dbReference>
<dbReference type="Gene3D" id="1.10.10.350">
    <property type="match status" value="1"/>
</dbReference>
<dbReference type="Gene3D" id="3.40.50.620">
    <property type="entry name" value="HUPs"/>
    <property type="match status" value="1"/>
</dbReference>
<dbReference type="HAMAP" id="MF_00022">
    <property type="entry name" value="Glu_tRNA_synth_type1"/>
    <property type="match status" value="1"/>
</dbReference>
<dbReference type="InterPro" id="IPR045462">
    <property type="entry name" value="aa-tRNA-synth_I_cd-bd"/>
</dbReference>
<dbReference type="InterPro" id="IPR020751">
    <property type="entry name" value="aa-tRNA-synth_I_codon-bd_sub2"/>
</dbReference>
<dbReference type="InterPro" id="IPR001412">
    <property type="entry name" value="aa-tRNA-synth_I_CS"/>
</dbReference>
<dbReference type="InterPro" id="IPR008925">
    <property type="entry name" value="aa_tRNA-synth_I_cd-bd_sf"/>
</dbReference>
<dbReference type="InterPro" id="IPR004527">
    <property type="entry name" value="Glu-tRNA-ligase_bac/mito"/>
</dbReference>
<dbReference type="InterPro" id="IPR000924">
    <property type="entry name" value="Glu/Gln-tRNA-synth"/>
</dbReference>
<dbReference type="InterPro" id="IPR020058">
    <property type="entry name" value="Glu/Gln-tRNA-synth_Ib_cat-dom"/>
</dbReference>
<dbReference type="InterPro" id="IPR049940">
    <property type="entry name" value="GluQ/Sye"/>
</dbReference>
<dbReference type="InterPro" id="IPR033910">
    <property type="entry name" value="GluRS_core"/>
</dbReference>
<dbReference type="InterPro" id="IPR014729">
    <property type="entry name" value="Rossmann-like_a/b/a_fold"/>
</dbReference>
<dbReference type="NCBIfam" id="TIGR00464">
    <property type="entry name" value="gltX_bact"/>
    <property type="match status" value="1"/>
</dbReference>
<dbReference type="PANTHER" id="PTHR43311">
    <property type="entry name" value="GLUTAMATE--TRNA LIGASE"/>
    <property type="match status" value="1"/>
</dbReference>
<dbReference type="PANTHER" id="PTHR43311:SF2">
    <property type="entry name" value="GLUTAMATE--TRNA LIGASE, MITOCHONDRIAL-RELATED"/>
    <property type="match status" value="1"/>
</dbReference>
<dbReference type="Pfam" id="PF19269">
    <property type="entry name" value="Anticodon_2"/>
    <property type="match status" value="1"/>
</dbReference>
<dbReference type="Pfam" id="PF00749">
    <property type="entry name" value="tRNA-synt_1c"/>
    <property type="match status" value="1"/>
</dbReference>
<dbReference type="PRINTS" id="PR00987">
    <property type="entry name" value="TRNASYNTHGLU"/>
</dbReference>
<dbReference type="SUPFAM" id="SSF48163">
    <property type="entry name" value="An anticodon-binding domain of class I aminoacyl-tRNA synthetases"/>
    <property type="match status" value="1"/>
</dbReference>
<dbReference type="SUPFAM" id="SSF52374">
    <property type="entry name" value="Nucleotidylyl transferase"/>
    <property type="match status" value="1"/>
</dbReference>
<dbReference type="PROSITE" id="PS00178">
    <property type="entry name" value="AA_TRNA_LIGASE_I"/>
    <property type="match status" value="1"/>
</dbReference>
<organism>
    <name type="scientific">Bacillus subtilis (strain 168)</name>
    <dbReference type="NCBI Taxonomy" id="224308"/>
    <lineage>
        <taxon>Bacteria</taxon>
        <taxon>Bacillati</taxon>
        <taxon>Bacillota</taxon>
        <taxon>Bacilli</taxon>
        <taxon>Bacillales</taxon>
        <taxon>Bacillaceae</taxon>
        <taxon>Bacillus</taxon>
    </lineage>
</organism>
<protein>
    <recommendedName>
        <fullName evidence="1">Glutamate--tRNA ligase</fullName>
        <ecNumber evidence="1">6.1.1.17</ecNumber>
    </recommendedName>
    <alternativeName>
        <fullName evidence="1">Glutamyl-tRNA synthetase</fullName>
        <shortName evidence="1">GluRS</shortName>
    </alternativeName>
</protein>
<evidence type="ECO:0000255" key="1">
    <source>
        <dbReference type="HAMAP-Rule" id="MF_00022"/>
    </source>
</evidence>
<evidence type="ECO:0000305" key="2">
    <source>
    </source>
</evidence>
<name>SYE_BACSU</name>
<proteinExistence type="inferred from homology"/>
<accession>P22250</accession>
<feature type="chain" id="PRO_0000119508" description="Glutamate--tRNA ligase">
    <location>
        <begin position="1"/>
        <end position="483"/>
    </location>
</feature>
<feature type="short sequence motif" description="'HIGH' region" evidence="1">
    <location>
        <begin position="11"/>
        <end position="21"/>
    </location>
</feature>
<feature type="short sequence motif" description="'KMSKS' region" evidence="1">
    <location>
        <begin position="252"/>
        <end position="256"/>
    </location>
</feature>
<feature type="binding site" evidence="1">
    <location>
        <position position="108"/>
    </location>
    <ligand>
        <name>Zn(2+)</name>
        <dbReference type="ChEBI" id="CHEBI:29105"/>
    </ligand>
</feature>
<feature type="binding site" evidence="1">
    <location>
        <position position="110"/>
    </location>
    <ligand>
        <name>Zn(2+)</name>
        <dbReference type="ChEBI" id="CHEBI:29105"/>
    </ligand>
</feature>
<feature type="binding site" evidence="1">
    <location>
        <position position="135"/>
    </location>
    <ligand>
        <name>Zn(2+)</name>
        <dbReference type="ChEBI" id="CHEBI:29105"/>
    </ligand>
</feature>
<feature type="binding site" evidence="1">
    <location>
        <position position="137"/>
    </location>
    <ligand>
        <name>Zn(2+)</name>
        <dbReference type="ChEBI" id="CHEBI:29105"/>
    </ligand>
</feature>
<feature type="binding site" evidence="1">
    <location>
        <position position="255"/>
    </location>
    <ligand>
        <name>ATP</name>
        <dbReference type="ChEBI" id="CHEBI:30616"/>
    </ligand>
</feature>
<comment type="function">
    <text evidence="1">Catalyzes the attachment of glutamate to tRNA(Glu) in a two-step reaction: glutamate is first activated by ATP to form Glu-AMP and then transferred to the acceptor end of tRNA(Glu).</text>
</comment>
<comment type="catalytic activity">
    <reaction evidence="1">
        <text>tRNA(Glu) + L-glutamate + ATP = L-glutamyl-tRNA(Glu) + AMP + diphosphate</text>
        <dbReference type="Rhea" id="RHEA:23540"/>
        <dbReference type="Rhea" id="RHEA-COMP:9663"/>
        <dbReference type="Rhea" id="RHEA-COMP:9680"/>
        <dbReference type="ChEBI" id="CHEBI:29985"/>
        <dbReference type="ChEBI" id="CHEBI:30616"/>
        <dbReference type="ChEBI" id="CHEBI:33019"/>
        <dbReference type="ChEBI" id="CHEBI:78442"/>
        <dbReference type="ChEBI" id="CHEBI:78520"/>
        <dbReference type="ChEBI" id="CHEBI:456215"/>
        <dbReference type="EC" id="6.1.1.17"/>
    </reaction>
</comment>
<comment type="cofactor">
    <cofactor evidence="1 2">
        <name>Zn(2+)</name>
        <dbReference type="ChEBI" id="CHEBI:29105"/>
    </cofactor>
    <text evidence="1 2">Binds 1 zinc ion per subunit.</text>
</comment>
<comment type="subunit">
    <text evidence="1">Monomer.</text>
</comment>
<comment type="subcellular location">
    <subcellularLocation>
        <location evidence="1">Cytoplasm</location>
    </subcellularLocation>
</comment>
<comment type="similarity">
    <text evidence="1">Belongs to the class-I aminoacyl-tRNA synthetase family. Glutamate--tRNA ligase type 1 subfamily.</text>
</comment>